<reference key="1">
    <citation type="journal article" date="2005" name="PLoS Biol.">
        <title>The Wolbachia genome of Brugia malayi: endosymbiont evolution within a human pathogenic nematode.</title>
        <authorList>
            <person name="Foster J."/>
            <person name="Ganatra M."/>
            <person name="Kamal I."/>
            <person name="Ware J."/>
            <person name="Makarova K."/>
            <person name="Ivanova N."/>
            <person name="Bhattacharyya A."/>
            <person name="Kapatral V."/>
            <person name="Kumar S."/>
            <person name="Posfai J."/>
            <person name="Vincze T."/>
            <person name="Ingram J."/>
            <person name="Moran L."/>
            <person name="Lapidus A."/>
            <person name="Omelchenko M."/>
            <person name="Kyrpides N."/>
            <person name="Ghedin E."/>
            <person name="Wang S."/>
            <person name="Goltsman E."/>
            <person name="Joukov V."/>
            <person name="Ostrovskaya O."/>
            <person name="Tsukerman K."/>
            <person name="Mazur M."/>
            <person name="Comb D."/>
            <person name="Koonin E."/>
            <person name="Slatko B."/>
        </authorList>
    </citation>
    <scope>NUCLEOTIDE SEQUENCE [LARGE SCALE GENOMIC DNA]</scope>
    <source>
        <strain>TRS</strain>
    </source>
</reference>
<keyword id="KW-0030">Aminoacyl-tRNA synthetase</keyword>
<keyword id="KW-0067">ATP-binding</keyword>
<keyword id="KW-0963">Cytoplasm</keyword>
<keyword id="KW-0436">Ligase</keyword>
<keyword id="KW-0547">Nucleotide-binding</keyword>
<keyword id="KW-0648">Protein biosynthesis</keyword>
<keyword id="KW-1185">Reference proteome</keyword>
<comment type="function">
    <text evidence="1">Catalyzes the attachment of serine to tRNA(Ser). Is also able to aminoacylate tRNA(Sec) with serine, to form the misacylated tRNA L-seryl-tRNA(Sec), which will be further converted into selenocysteinyl-tRNA(Sec).</text>
</comment>
<comment type="catalytic activity">
    <reaction evidence="1">
        <text>tRNA(Ser) + L-serine + ATP = L-seryl-tRNA(Ser) + AMP + diphosphate + H(+)</text>
        <dbReference type="Rhea" id="RHEA:12292"/>
        <dbReference type="Rhea" id="RHEA-COMP:9669"/>
        <dbReference type="Rhea" id="RHEA-COMP:9703"/>
        <dbReference type="ChEBI" id="CHEBI:15378"/>
        <dbReference type="ChEBI" id="CHEBI:30616"/>
        <dbReference type="ChEBI" id="CHEBI:33019"/>
        <dbReference type="ChEBI" id="CHEBI:33384"/>
        <dbReference type="ChEBI" id="CHEBI:78442"/>
        <dbReference type="ChEBI" id="CHEBI:78533"/>
        <dbReference type="ChEBI" id="CHEBI:456215"/>
        <dbReference type="EC" id="6.1.1.11"/>
    </reaction>
</comment>
<comment type="catalytic activity">
    <reaction evidence="1">
        <text>tRNA(Sec) + L-serine + ATP = L-seryl-tRNA(Sec) + AMP + diphosphate + H(+)</text>
        <dbReference type="Rhea" id="RHEA:42580"/>
        <dbReference type="Rhea" id="RHEA-COMP:9742"/>
        <dbReference type="Rhea" id="RHEA-COMP:10128"/>
        <dbReference type="ChEBI" id="CHEBI:15378"/>
        <dbReference type="ChEBI" id="CHEBI:30616"/>
        <dbReference type="ChEBI" id="CHEBI:33019"/>
        <dbReference type="ChEBI" id="CHEBI:33384"/>
        <dbReference type="ChEBI" id="CHEBI:78442"/>
        <dbReference type="ChEBI" id="CHEBI:78533"/>
        <dbReference type="ChEBI" id="CHEBI:456215"/>
        <dbReference type="EC" id="6.1.1.11"/>
    </reaction>
</comment>
<comment type="pathway">
    <text evidence="1">Aminoacyl-tRNA biosynthesis; selenocysteinyl-tRNA(Sec) biosynthesis; L-seryl-tRNA(Sec) from L-serine and tRNA(Sec): step 1/1.</text>
</comment>
<comment type="subunit">
    <text evidence="1">Homodimer. The tRNA molecule binds across the dimer.</text>
</comment>
<comment type="subcellular location">
    <subcellularLocation>
        <location evidence="1">Cytoplasm</location>
    </subcellularLocation>
</comment>
<comment type="domain">
    <text evidence="1">Consists of two distinct domains, a catalytic core and a N-terminal extension that is involved in tRNA binding.</text>
</comment>
<comment type="similarity">
    <text evidence="1">Belongs to the class-II aminoacyl-tRNA synthetase family. Type-1 seryl-tRNA synthetase subfamily.</text>
</comment>
<name>SYS_WOLTR</name>
<evidence type="ECO:0000255" key="1">
    <source>
        <dbReference type="HAMAP-Rule" id="MF_00176"/>
    </source>
</evidence>
<dbReference type="EC" id="6.1.1.11" evidence="1"/>
<dbReference type="EMBL" id="AE017321">
    <property type="protein sequence ID" value="AAW71052.1"/>
    <property type="molecule type" value="Genomic_DNA"/>
</dbReference>
<dbReference type="RefSeq" id="WP_011256662.1">
    <property type="nucleotide sequence ID" value="NC_006833.1"/>
</dbReference>
<dbReference type="SMR" id="Q5GSH2"/>
<dbReference type="STRING" id="292805.Wbm0464"/>
<dbReference type="KEGG" id="wbm:Wbm0464"/>
<dbReference type="eggNOG" id="COG0172">
    <property type="taxonomic scope" value="Bacteria"/>
</dbReference>
<dbReference type="HOGENOM" id="CLU_023797_1_1_5"/>
<dbReference type="UniPathway" id="UPA00906">
    <property type="reaction ID" value="UER00895"/>
</dbReference>
<dbReference type="Proteomes" id="UP000000534">
    <property type="component" value="Chromosome"/>
</dbReference>
<dbReference type="GO" id="GO:0005737">
    <property type="term" value="C:cytoplasm"/>
    <property type="evidence" value="ECO:0007669"/>
    <property type="project" value="UniProtKB-SubCell"/>
</dbReference>
<dbReference type="GO" id="GO:0005524">
    <property type="term" value="F:ATP binding"/>
    <property type="evidence" value="ECO:0007669"/>
    <property type="project" value="UniProtKB-UniRule"/>
</dbReference>
<dbReference type="GO" id="GO:0004828">
    <property type="term" value="F:serine-tRNA ligase activity"/>
    <property type="evidence" value="ECO:0007669"/>
    <property type="project" value="UniProtKB-UniRule"/>
</dbReference>
<dbReference type="GO" id="GO:0016260">
    <property type="term" value="P:selenocysteine biosynthetic process"/>
    <property type="evidence" value="ECO:0007669"/>
    <property type="project" value="UniProtKB-UniRule"/>
</dbReference>
<dbReference type="GO" id="GO:0006434">
    <property type="term" value="P:seryl-tRNA aminoacylation"/>
    <property type="evidence" value="ECO:0007669"/>
    <property type="project" value="UniProtKB-UniRule"/>
</dbReference>
<dbReference type="CDD" id="cd00770">
    <property type="entry name" value="SerRS_core"/>
    <property type="match status" value="1"/>
</dbReference>
<dbReference type="Gene3D" id="3.30.930.10">
    <property type="entry name" value="Bira Bifunctional Protein, Domain 2"/>
    <property type="match status" value="1"/>
</dbReference>
<dbReference type="Gene3D" id="1.10.287.40">
    <property type="entry name" value="Serine-tRNA synthetase, tRNA binding domain"/>
    <property type="match status" value="1"/>
</dbReference>
<dbReference type="HAMAP" id="MF_00176">
    <property type="entry name" value="Ser_tRNA_synth_type1"/>
    <property type="match status" value="1"/>
</dbReference>
<dbReference type="InterPro" id="IPR002314">
    <property type="entry name" value="aa-tRNA-synt_IIb"/>
</dbReference>
<dbReference type="InterPro" id="IPR006195">
    <property type="entry name" value="aa-tRNA-synth_II"/>
</dbReference>
<dbReference type="InterPro" id="IPR045864">
    <property type="entry name" value="aa-tRNA-synth_II/BPL/LPL"/>
</dbReference>
<dbReference type="InterPro" id="IPR002317">
    <property type="entry name" value="Ser-tRNA-ligase_type_1"/>
</dbReference>
<dbReference type="InterPro" id="IPR015866">
    <property type="entry name" value="Ser-tRNA-synth_1_N"/>
</dbReference>
<dbReference type="InterPro" id="IPR042103">
    <property type="entry name" value="SerRS_1_N_sf"/>
</dbReference>
<dbReference type="InterPro" id="IPR033729">
    <property type="entry name" value="SerRS_core"/>
</dbReference>
<dbReference type="InterPro" id="IPR010978">
    <property type="entry name" value="tRNA-bd_arm"/>
</dbReference>
<dbReference type="NCBIfam" id="TIGR00414">
    <property type="entry name" value="serS"/>
    <property type="match status" value="1"/>
</dbReference>
<dbReference type="PANTHER" id="PTHR43697:SF1">
    <property type="entry name" value="SERINE--TRNA LIGASE"/>
    <property type="match status" value="1"/>
</dbReference>
<dbReference type="PANTHER" id="PTHR43697">
    <property type="entry name" value="SERYL-TRNA SYNTHETASE"/>
    <property type="match status" value="1"/>
</dbReference>
<dbReference type="Pfam" id="PF02403">
    <property type="entry name" value="Seryl_tRNA_N"/>
    <property type="match status" value="1"/>
</dbReference>
<dbReference type="Pfam" id="PF00587">
    <property type="entry name" value="tRNA-synt_2b"/>
    <property type="match status" value="1"/>
</dbReference>
<dbReference type="PIRSF" id="PIRSF001529">
    <property type="entry name" value="Ser-tRNA-synth_IIa"/>
    <property type="match status" value="1"/>
</dbReference>
<dbReference type="PRINTS" id="PR00981">
    <property type="entry name" value="TRNASYNTHSER"/>
</dbReference>
<dbReference type="SUPFAM" id="SSF55681">
    <property type="entry name" value="Class II aaRS and biotin synthetases"/>
    <property type="match status" value="1"/>
</dbReference>
<dbReference type="SUPFAM" id="SSF46589">
    <property type="entry name" value="tRNA-binding arm"/>
    <property type="match status" value="1"/>
</dbReference>
<dbReference type="PROSITE" id="PS50862">
    <property type="entry name" value="AA_TRNA_LIGASE_II"/>
    <property type="match status" value="1"/>
</dbReference>
<accession>Q5GSH2</accession>
<sequence length="425" mass="48566">MHDIEYIRQNSEEFEKAMESRGMKEFSAEEILKVDHKKRLLTTKLQDLNRQRNEITKKIKELKMSKSPCEKQIKSSKNITNEIEAISLKEQMEKDKLVNILSNLPNIPVQGVPIGAGENSNLEVRRYREKRQFDFVPKSHYELGERLGLMDFEQAAKISGSRFAILKGQLAKLGRALINFMLEMHVNEFGYTEVYHPVLVKNEAMYNVGQLPKFSDDSYLTTDELRLIPTGEVVLTNSVADKIVEEKKLPIRFTAYSECFRKEAGSAGQSTRGMIRQHQFGKVELVSITTEDQSNDELERMTGVAEEILKRLELPYRVILLCSGDMGFAAQKTYDIEVWLPEQNRYREISSCSNCGNFQARRMNAKYSLEANKKVKKYVHTLNGSALAIGRTIIAVMENYQNPDGSITIPNVLQKYISNGTVISK</sequence>
<gene>
    <name evidence="1" type="primary">serS</name>
    <name type="ordered locus">Wbm0464</name>
</gene>
<protein>
    <recommendedName>
        <fullName evidence="1">Serine--tRNA ligase</fullName>
        <ecNumber evidence="1">6.1.1.11</ecNumber>
    </recommendedName>
    <alternativeName>
        <fullName evidence="1">Seryl-tRNA synthetase</fullName>
        <shortName evidence="1">SerRS</shortName>
    </alternativeName>
    <alternativeName>
        <fullName evidence="1">Seryl-tRNA(Ser/Sec) synthetase</fullName>
    </alternativeName>
</protein>
<proteinExistence type="inferred from homology"/>
<feature type="chain" id="PRO_0000122161" description="Serine--tRNA ligase">
    <location>
        <begin position="1"/>
        <end position="425"/>
    </location>
</feature>
<feature type="binding site" evidence="1">
    <location>
        <begin position="230"/>
        <end position="232"/>
    </location>
    <ligand>
        <name>L-serine</name>
        <dbReference type="ChEBI" id="CHEBI:33384"/>
    </ligand>
</feature>
<feature type="binding site" evidence="1">
    <location>
        <begin position="261"/>
        <end position="263"/>
    </location>
    <ligand>
        <name>ATP</name>
        <dbReference type="ChEBI" id="CHEBI:30616"/>
    </ligand>
</feature>
<feature type="binding site" evidence="1">
    <location>
        <position position="284"/>
    </location>
    <ligand>
        <name>L-serine</name>
        <dbReference type="ChEBI" id="CHEBI:33384"/>
    </ligand>
</feature>
<feature type="binding site" evidence="1">
    <location>
        <begin position="348"/>
        <end position="351"/>
    </location>
    <ligand>
        <name>ATP</name>
        <dbReference type="ChEBI" id="CHEBI:30616"/>
    </ligand>
</feature>
<feature type="binding site" evidence="1">
    <location>
        <position position="385"/>
    </location>
    <ligand>
        <name>L-serine</name>
        <dbReference type="ChEBI" id="CHEBI:33384"/>
    </ligand>
</feature>
<organism>
    <name type="scientific">Wolbachia sp. subsp. Brugia malayi (strain TRS)</name>
    <dbReference type="NCBI Taxonomy" id="292805"/>
    <lineage>
        <taxon>Bacteria</taxon>
        <taxon>Pseudomonadati</taxon>
        <taxon>Pseudomonadota</taxon>
        <taxon>Alphaproteobacteria</taxon>
        <taxon>Rickettsiales</taxon>
        <taxon>Anaplasmataceae</taxon>
        <taxon>Wolbachieae</taxon>
        <taxon>Wolbachia</taxon>
    </lineage>
</organism>